<sequence length="299" mass="31294">MTAEIIDGKAFAAGVRAKVAHNVETLRDTHGITPGLAVVLVGEDPASEVYVANKHRQTVEVGMASFSHKLPAKTSEADLFALIDQLNADPAVHGILCQFPVPEHLNERAVVARIDPAKDVDGLSVVNAGLLASGERGLVSCTPLGCLMLLRDRLGDLSGLEAVVIGRSNLFGKPMGQLLLRENATVTMAHSRTRDLAQVCRRADILVAAVGRAEMVKADWVKPGATVIDVGITRQPHPDDPDKTRLLGDVDFAAVAEVAGAITPVPGGVGPMTIACLLANTVTACCRAHGLPEPDGLAV</sequence>
<proteinExistence type="inferred from homology"/>
<comment type="function">
    <text evidence="1">Catalyzes the oxidation of 5,10-methylenetetrahydrofolate to 5,10-methenyltetrahydrofolate and then the hydrolysis of 5,10-methenyltetrahydrofolate to 10-formyltetrahydrofolate.</text>
</comment>
<comment type="catalytic activity">
    <reaction evidence="1">
        <text>(6R)-5,10-methylene-5,6,7,8-tetrahydrofolate + NADP(+) = (6R)-5,10-methenyltetrahydrofolate + NADPH</text>
        <dbReference type="Rhea" id="RHEA:22812"/>
        <dbReference type="ChEBI" id="CHEBI:15636"/>
        <dbReference type="ChEBI" id="CHEBI:57455"/>
        <dbReference type="ChEBI" id="CHEBI:57783"/>
        <dbReference type="ChEBI" id="CHEBI:58349"/>
        <dbReference type="EC" id="1.5.1.5"/>
    </reaction>
</comment>
<comment type="catalytic activity">
    <reaction evidence="1">
        <text>(6R)-5,10-methenyltetrahydrofolate + H2O = (6R)-10-formyltetrahydrofolate + H(+)</text>
        <dbReference type="Rhea" id="RHEA:23700"/>
        <dbReference type="ChEBI" id="CHEBI:15377"/>
        <dbReference type="ChEBI" id="CHEBI:15378"/>
        <dbReference type="ChEBI" id="CHEBI:57455"/>
        <dbReference type="ChEBI" id="CHEBI:195366"/>
        <dbReference type="EC" id="3.5.4.9"/>
    </reaction>
</comment>
<comment type="pathway">
    <text evidence="1">One-carbon metabolism; tetrahydrofolate interconversion.</text>
</comment>
<comment type="subunit">
    <text evidence="1">Homodimer.</text>
</comment>
<comment type="similarity">
    <text evidence="1">Belongs to the tetrahydrofolate dehydrogenase/cyclohydrolase family.</text>
</comment>
<organism>
    <name type="scientific">Dinoroseobacter shibae (strain DSM 16493 / NCIMB 14021 / DFL 12)</name>
    <dbReference type="NCBI Taxonomy" id="398580"/>
    <lineage>
        <taxon>Bacteria</taxon>
        <taxon>Pseudomonadati</taxon>
        <taxon>Pseudomonadota</taxon>
        <taxon>Alphaproteobacteria</taxon>
        <taxon>Rhodobacterales</taxon>
        <taxon>Roseobacteraceae</taxon>
        <taxon>Dinoroseobacter</taxon>
    </lineage>
</organism>
<keyword id="KW-0028">Amino-acid biosynthesis</keyword>
<keyword id="KW-0368">Histidine biosynthesis</keyword>
<keyword id="KW-0378">Hydrolase</keyword>
<keyword id="KW-0486">Methionine biosynthesis</keyword>
<keyword id="KW-0511">Multifunctional enzyme</keyword>
<keyword id="KW-0521">NADP</keyword>
<keyword id="KW-0554">One-carbon metabolism</keyword>
<keyword id="KW-0560">Oxidoreductase</keyword>
<keyword id="KW-0658">Purine biosynthesis</keyword>
<keyword id="KW-1185">Reference proteome</keyword>
<evidence type="ECO:0000255" key="1">
    <source>
        <dbReference type="HAMAP-Rule" id="MF_01576"/>
    </source>
</evidence>
<protein>
    <recommendedName>
        <fullName evidence="1">Bifunctional protein FolD</fullName>
    </recommendedName>
    <domain>
        <recommendedName>
            <fullName evidence="1">Methylenetetrahydrofolate dehydrogenase</fullName>
            <ecNumber evidence="1">1.5.1.5</ecNumber>
        </recommendedName>
    </domain>
    <domain>
        <recommendedName>
            <fullName evidence="1">Methenyltetrahydrofolate cyclohydrolase</fullName>
            <ecNumber evidence="1">3.5.4.9</ecNumber>
        </recommendedName>
    </domain>
</protein>
<feature type="chain" id="PRO_0000340580" description="Bifunctional protein FolD">
    <location>
        <begin position="1"/>
        <end position="299"/>
    </location>
</feature>
<feature type="binding site" evidence="1">
    <location>
        <begin position="166"/>
        <end position="168"/>
    </location>
    <ligand>
        <name>NADP(+)</name>
        <dbReference type="ChEBI" id="CHEBI:58349"/>
    </ligand>
</feature>
<feature type="binding site" evidence="1">
    <location>
        <position position="191"/>
    </location>
    <ligand>
        <name>NADP(+)</name>
        <dbReference type="ChEBI" id="CHEBI:58349"/>
    </ligand>
</feature>
<feature type="binding site" evidence="1">
    <location>
        <position position="232"/>
    </location>
    <ligand>
        <name>NADP(+)</name>
        <dbReference type="ChEBI" id="CHEBI:58349"/>
    </ligand>
</feature>
<reference key="1">
    <citation type="journal article" date="2010" name="ISME J.">
        <title>The complete genome sequence of the algal symbiont Dinoroseobacter shibae: a hitchhiker's guide to life in the sea.</title>
        <authorList>
            <person name="Wagner-Dobler I."/>
            <person name="Ballhausen B."/>
            <person name="Berger M."/>
            <person name="Brinkhoff T."/>
            <person name="Buchholz I."/>
            <person name="Bunk B."/>
            <person name="Cypionka H."/>
            <person name="Daniel R."/>
            <person name="Drepper T."/>
            <person name="Gerdts G."/>
            <person name="Hahnke S."/>
            <person name="Han C."/>
            <person name="Jahn D."/>
            <person name="Kalhoefer D."/>
            <person name="Kiss H."/>
            <person name="Klenk H.P."/>
            <person name="Kyrpides N."/>
            <person name="Liebl W."/>
            <person name="Liesegang H."/>
            <person name="Meincke L."/>
            <person name="Pati A."/>
            <person name="Petersen J."/>
            <person name="Piekarski T."/>
            <person name="Pommerenke C."/>
            <person name="Pradella S."/>
            <person name="Pukall R."/>
            <person name="Rabus R."/>
            <person name="Stackebrandt E."/>
            <person name="Thole S."/>
            <person name="Thompson L."/>
            <person name="Tielen P."/>
            <person name="Tomasch J."/>
            <person name="von Jan M."/>
            <person name="Wanphrut N."/>
            <person name="Wichels A."/>
            <person name="Zech H."/>
            <person name="Simon M."/>
        </authorList>
    </citation>
    <scope>NUCLEOTIDE SEQUENCE [LARGE SCALE GENOMIC DNA]</scope>
    <source>
        <strain>DSM 16493 / NCIMB 14021 / DFL 12</strain>
    </source>
</reference>
<dbReference type="EC" id="1.5.1.5" evidence="1"/>
<dbReference type="EC" id="3.5.4.9" evidence="1"/>
<dbReference type="EMBL" id="CP000830">
    <property type="protein sequence ID" value="ABV93027.1"/>
    <property type="molecule type" value="Genomic_DNA"/>
</dbReference>
<dbReference type="RefSeq" id="WP_012177957.1">
    <property type="nucleotide sequence ID" value="NC_009952.1"/>
</dbReference>
<dbReference type="SMR" id="A8LIR3"/>
<dbReference type="STRING" id="398580.Dshi_1285"/>
<dbReference type="KEGG" id="dsh:Dshi_1285"/>
<dbReference type="eggNOG" id="COG0190">
    <property type="taxonomic scope" value="Bacteria"/>
</dbReference>
<dbReference type="HOGENOM" id="CLU_034045_2_1_5"/>
<dbReference type="OrthoDB" id="9803580at2"/>
<dbReference type="UniPathway" id="UPA00193"/>
<dbReference type="Proteomes" id="UP000006833">
    <property type="component" value="Chromosome"/>
</dbReference>
<dbReference type="GO" id="GO:0005829">
    <property type="term" value="C:cytosol"/>
    <property type="evidence" value="ECO:0007669"/>
    <property type="project" value="TreeGrafter"/>
</dbReference>
<dbReference type="GO" id="GO:0004477">
    <property type="term" value="F:methenyltetrahydrofolate cyclohydrolase activity"/>
    <property type="evidence" value="ECO:0007669"/>
    <property type="project" value="UniProtKB-UniRule"/>
</dbReference>
<dbReference type="GO" id="GO:0004488">
    <property type="term" value="F:methylenetetrahydrofolate dehydrogenase (NADP+) activity"/>
    <property type="evidence" value="ECO:0007669"/>
    <property type="project" value="UniProtKB-UniRule"/>
</dbReference>
<dbReference type="GO" id="GO:0000105">
    <property type="term" value="P:L-histidine biosynthetic process"/>
    <property type="evidence" value="ECO:0007669"/>
    <property type="project" value="UniProtKB-KW"/>
</dbReference>
<dbReference type="GO" id="GO:0009086">
    <property type="term" value="P:methionine biosynthetic process"/>
    <property type="evidence" value="ECO:0007669"/>
    <property type="project" value="UniProtKB-KW"/>
</dbReference>
<dbReference type="GO" id="GO:0006164">
    <property type="term" value="P:purine nucleotide biosynthetic process"/>
    <property type="evidence" value="ECO:0007669"/>
    <property type="project" value="UniProtKB-KW"/>
</dbReference>
<dbReference type="GO" id="GO:0035999">
    <property type="term" value="P:tetrahydrofolate interconversion"/>
    <property type="evidence" value="ECO:0007669"/>
    <property type="project" value="UniProtKB-UniRule"/>
</dbReference>
<dbReference type="CDD" id="cd01080">
    <property type="entry name" value="NAD_bind_m-THF_DH_Cyclohyd"/>
    <property type="match status" value="1"/>
</dbReference>
<dbReference type="FunFam" id="3.40.50.720:FF:000006">
    <property type="entry name" value="Bifunctional protein FolD"/>
    <property type="match status" value="1"/>
</dbReference>
<dbReference type="FunFam" id="3.40.50.10860:FF:000005">
    <property type="entry name" value="C-1-tetrahydrofolate synthase, cytoplasmic, putative"/>
    <property type="match status" value="1"/>
</dbReference>
<dbReference type="Gene3D" id="3.40.50.10860">
    <property type="entry name" value="Leucine Dehydrogenase, chain A, domain 1"/>
    <property type="match status" value="1"/>
</dbReference>
<dbReference type="Gene3D" id="3.40.50.720">
    <property type="entry name" value="NAD(P)-binding Rossmann-like Domain"/>
    <property type="match status" value="1"/>
</dbReference>
<dbReference type="HAMAP" id="MF_01576">
    <property type="entry name" value="THF_DHG_CYH"/>
    <property type="match status" value="1"/>
</dbReference>
<dbReference type="InterPro" id="IPR046346">
    <property type="entry name" value="Aminoacid_DH-like_N_sf"/>
</dbReference>
<dbReference type="InterPro" id="IPR036291">
    <property type="entry name" value="NAD(P)-bd_dom_sf"/>
</dbReference>
<dbReference type="InterPro" id="IPR000672">
    <property type="entry name" value="THF_DH/CycHdrlase"/>
</dbReference>
<dbReference type="InterPro" id="IPR020630">
    <property type="entry name" value="THF_DH/CycHdrlase_cat_dom"/>
</dbReference>
<dbReference type="InterPro" id="IPR020867">
    <property type="entry name" value="THF_DH/CycHdrlase_CS"/>
</dbReference>
<dbReference type="InterPro" id="IPR020631">
    <property type="entry name" value="THF_DH/CycHdrlase_NAD-bd_dom"/>
</dbReference>
<dbReference type="NCBIfam" id="NF010783">
    <property type="entry name" value="PRK14186.1"/>
    <property type="match status" value="1"/>
</dbReference>
<dbReference type="NCBIfam" id="NF010785">
    <property type="entry name" value="PRK14188.1"/>
    <property type="match status" value="1"/>
</dbReference>
<dbReference type="PANTHER" id="PTHR48099:SF5">
    <property type="entry name" value="C-1-TETRAHYDROFOLATE SYNTHASE, CYTOPLASMIC"/>
    <property type="match status" value="1"/>
</dbReference>
<dbReference type="PANTHER" id="PTHR48099">
    <property type="entry name" value="C-1-TETRAHYDROFOLATE SYNTHASE, CYTOPLASMIC-RELATED"/>
    <property type="match status" value="1"/>
</dbReference>
<dbReference type="Pfam" id="PF00763">
    <property type="entry name" value="THF_DHG_CYH"/>
    <property type="match status" value="1"/>
</dbReference>
<dbReference type="Pfam" id="PF02882">
    <property type="entry name" value="THF_DHG_CYH_C"/>
    <property type="match status" value="1"/>
</dbReference>
<dbReference type="PRINTS" id="PR00085">
    <property type="entry name" value="THFDHDRGNASE"/>
</dbReference>
<dbReference type="SUPFAM" id="SSF53223">
    <property type="entry name" value="Aminoacid dehydrogenase-like, N-terminal domain"/>
    <property type="match status" value="1"/>
</dbReference>
<dbReference type="SUPFAM" id="SSF51735">
    <property type="entry name" value="NAD(P)-binding Rossmann-fold domains"/>
    <property type="match status" value="1"/>
</dbReference>
<dbReference type="PROSITE" id="PS00767">
    <property type="entry name" value="THF_DHG_CYH_2"/>
    <property type="match status" value="1"/>
</dbReference>
<accession>A8LIR3</accession>
<name>FOLD_DINSH</name>
<gene>
    <name evidence="1" type="primary">folD</name>
    <name type="ordered locus">Dshi_1285</name>
</gene>